<organism>
    <name type="scientific">Actinobacillus pleuropneumoniae serotype 3 (strain JL03)</name>
    <dbReference type="NCBI Taxonomy" id="434271"/>
    <lineage>
        <taxon>Bacteria</taxon>
        <taxon>Pseudomonadati</taxon>
        <taxon>Pseudomonadota</taxon>
        <taxon>Gammaproteobacteria</taxon>
        <taxon>Pasteurellales</taxon>
        <taxon>Pasteurellaceae</taxon>
        <taxon>Actinobacillus</taxon>
    </lineage>
</organism>
<protein>
    <recommendedName>
        <fullName evidence="1">Cell division protein FtsQ</fullName>
    </recommendedName>
</protein>
<name>FTSQ_ACTPJ</name>
<proteinExistence type="inferred from homology"/>
<sequence>MIVLLCVIFAFLVYSNWHSWLESLDRNPIRAYALTHKTRFTTNADIRETLSQKPALKGYFGQDIQDVKAKLLAISWVRDVVVRKVYPDRLSITLIEHNPVAVWNDVNFLSEQGIVFSLPPDRIDKTGFPMLYGPDTEGKVVLEAWSKIKADLKARNLDLSSVSVDNRGSWTITLSNNVELRLGRGEWTPKIDRFVTIFPEIDVPEGKKLAYVDLRYEHGAAVGFSPLPK</sequence>
<feature type="chain" id="PRO_0000414654" description="Cell division protein FtsQ">
    <location>
        <begin position="1"/>
        <end position="229"/>
    </location>
</feature>
<feature type="transmembrane region" description="Helical" evidence="1">
    <location>
        <begin position="1"/>
        <end position="21"/>
    </location>
</feature>
<feature type="topological domain" description="Periplasmic" evidence="1">
    <location>
        <begin position="22"/>
        <end position="229"/>
    </location>
</feature>
<feature type="domain" description="POTRA" evidence="2">
    <location>
        <begin position="27"/>
        <end position="97"/>
    </location>
</feature>
<evidence type="ECO:0000255" key="1">
    <source>
        <dbReference type="HAMAP-Rule" id="MF_00911"/>
    </source>
</evidence>
<evidence type="ECO:0000255" key="2">
    <source>
        <dbReference type="PROSITE-ProRule" id="PRU01115"/>
    </source>
</evidence>
<keyword id="KW-0131">Cell cycle</keyword>
<keyword id="KW-0132">Cell division</keyword>
<keyword id="KW-0997">Cell inner membrane</keyword>
<keyword id="KW-1003">Cell membrane</keyword>
<keyword id="KW-0472">Membrane</keyword>
<keyword id="KW-0812">Transmembrane</keyword>
<keyword id="KW-1133">Transmembrane helix</keyword>
<accession>B0BRI0</accession>
<gene>
    <name evidence="1" type="primary">ftsQ</name>
    <name type="ordered locus">APJL_0022</name>
</gene>
<dbReference type="EMBL" id="CP000687">
    <property type="protein sequence ID" value="ABY68628.1"/>
    <property type="molecule type" value="Genomic_DNA"/>
</dbReference>
<dbReference type="SMR" id="B0BRI0"/>
<dbReference type="KEGG" id="apj:APJL_0022"/>
<dbReference type="HOGENOM" id="CLU_064041_2_0_6"/>
<dbReference type="Proteomes" id="UP000008547">
    <property type="component" value="Chromosome"/>
</dbReference>
<dbReference type="GO" id="GO:0032153">
    <property type="term" value="C:cell division site"/>
    <property type="evidence" value="ECO:0007669"/>
    <property type="project" value="UniProtKB-UniRule"/>
</dbReference>
<dbReference type="GO" id="GO:0005886">
    <property type="term" value="C:plasma membrane"/>
    <property type="evidence" value="ECO:0007669"/>
    <property type="project" value="UniProtKB-SubCell"/>
</dbReference>
<dbReference type="GO" id="GO:0090529">
    <property type="term" value="P:cell septum assembly"/>
    <property type="evidence" value="ECO:0007669"/>
    <property type="project" value="InterPro"/>
</dbReference>
<dbReference type="GO" id="GO:0043093">
    <property type="term" value="P:FtsZ-dependent cytokinesis"/>
    <property type="evidence" value="ECO:0007669"/>
    <property type="project" value="UniProtKB-UniRule"/>
</dbReference>
<dbReference type="Gene3D" id="3.40.50.11690">
    <property type="entry name" value="Cell division protein FtsQ/DivIB"/>
    <property type="match status" value="1"/>
</dbReference>
<dbReference type="Gene3D" id="3.10.20.310">
    <property type="entry name" value="membrane protein fhac"/>
    <property type="match status" value="1"/>
</dbReference>
<dbReference type="HAMAP" id="MF_00911">
    <property type="entry name" value="FtsQ_subfam"/>
    <property type="match status" value="1"/>
</dbReference>
<dbReference type="InterPro" id="IPR005548">
    <property type="entry name" value="Cell_div_FtsQ/DivIB_C"/>
</dbReference>
<dbReference type="InterPro" id="IPR026579">
    <property type="entry name" value="FtsQ"/>
</dbReference>
<dbReference type="InterPro" id="IPR045335">
    <property type="entry name" value="FtsQ_C_sf"/>
</dbReference>
<dbReference type="InterPro" id="IPR034746">
    <property type="entry name" value="POTRA"/>
</dbReference>
<dbReference type="InterPro" id="IPR013685">
    <property type="entry name" value="POTRA_FtsQ_type"/>
</dbReference>
<dbReference type="PANTHER" id="PTHR35851">
    <property type="entry name" value="CELL DIVISION PROTEIN FTSQ"/>
    <property type="match status" value="1"/>
</dbReference>
<dbReference type="PANTHER" id="PTHR35851:SF1">
    <property type="entry name" value="CELL DIVISION PROTEIN FTSQ"/>
    <property type="match status" value="1"/>
</dbReference>
<dbReference type="Pfam" id="PF03799">
    <property type="entry name" value="FtsQ_DivIB_C"/>
    <property type="match status" value="1"/>
</dbReference>
<dbReference type="Pfam" id="PF08478">
    <property type="entry name" value="POTRA_1"/>
    <property type="match status" value="1"/>
</dbReference>
<dbReference type="PROSITE" id="PS51779">
    <property type="entry name" value="POTRA"/>
    <property type="match status" value="1"/>
</dbReference>
<comment type="function">
    <text evidence="1">Essential cell division protein. May link together the upstream cell division proteins, which are predominantly cytoplasmic, with the downstream cell division proteins, which are predominantly periplasmic. May control correct divisome assembly.</text>
</comment>
<comment type="subunit">
    <text evidence="1">Part of a complex composed of FtsB, FtsL and FtsQ.</text>
</comment>
<comment type="subcellular location">
    <subcellularLocation>
        <location evidence="1">Cell inner membrane</location>
        <topology evidence="1">Single-pass type II membrane protein</topology>
    </subcellularLocation>
    <text evidence="1">Localizes to the division septum.</text>
</comment>
<comment type="similarity">
    <text evidence="1">Belongs to the FtsQ/DivIB family. FtsQ subfamily.</text>
</comment>
<reference key="1">
    <citation type="journal article" date="2008" name="PLoS ONE">
        <title>Genome biology of Actinobacillus pleuropneumoniae JL03, an isolate of serotype 3 prevalent in China.</title>
        <authorList>
            <person name="Xu Z."/>
            <person name="Zhou Y."/>
            <person name="Li L."/>
            <person name="Zhou R."/>
            <person name="Xiao S."/>
            <person name="Wan Y."/>
            <person name="Zhang S."/>
            <person name="Wang K."/>
            <person name="Li W."/>
            <person name="Li L."/>
            <person name="Jin H."/>
            <person name="Kang M."/>
            <person name="Dalai B."/>
            <person name="Li T."/>
            <person name="Liu L."/>
            <person name="Cheng Y."/>
            <person name="Zhang L."/>
            <person name="Xu T."/>
            <person name="Zheng H."/>
            <person name="Pu S."/>
            <person name="Wang B."/>
            <person name="Gu W."/>
            <person name="Zhang X.L."/>
            <person name="Zhu G.-F."/>
            <person name="Wang S."/>
            <person name="Zhao G.-P."/>
            <person name="Chen H."/>
        </authorList>
    </citation>
    <scope>NUCLEOTIDE SEQUENCE [LARGE SCALE GENOMIC DNA]</scope>
    <source>
        <strain>JL03</strain>
    </source>
</reference>